<accession>P65335</accession>
<accession>Q97SJ9</accession>
<dbReference type="EC" id="4.4.1.21"/>
<dbReference type="EMBL" id="AE007317">
    <property type="protein sequence ID" value="AAK99112.1"/>
    <property type="molecule type" value="Genomic_DNA"/>
</dbReference>
<dbReference type="PIR" id="D97910">
    <property type="entry name" value="D97910"/>
</dbReference>
<dbReference type="RefSeq" id="NP_357902.1">
    <property type="nucleotide sequence ID" value="NC_003098.1"/>
</dbReference>
<dbReference type="RefSeq" id="WP_000032550.1">
    <property type="nucleotide sequence ID" value="NC_003098.1"/>
</dbReference>
<dbReference type="SMR" id="P65335"/>
<dbReference type="STRING" id="171101.spr0308"/>
<dbReference type="KEGG" id="spr:spr0308"/>
<dbReference type="PATRIC" id="fig|171101.6.peg.345"/>
<dbReference type="eggNOG" id="COG1854">
    <property type="taxonomic scope" value="Bacteria"/>
</dbReference>
<dbReference type="HOGENOM" id="CLU_107531_2_1_9"/>
<dbReference type="Proteomes" id="UP000000586">
    <property type="component" value="Chromosome"/>
</dbReference>
<dbReference type="GO" id="GO:0005829">
    <property type="term" value="C:cytosol"/>
    <property type="evidence" value="ECO:0000318"/>
    <property type="project" value="GO_Central"/>
</dbReference>
<dbReference type="GO" id="GO:0005506">
    <property type="term" value="F:iron ion binding"/>
    <property type="evidence" value="ECO:0007669"/>
    <property type="project" value="InterPro"/>
</dbReference>
<dbReference type="GO" id="GO:0043768">
    <property type="term" value="F:S-ribosylhomocysteine lyase activity"/>
    <property type="evidence" value="ECO:0000318"/>
    <property type="project" value="GO_Central"/>
</dbReference>
<dbReference type="GO" id="GO:0019284">
    <property type="term" value="P:L-methionine salvage from S-adenosylmethionine"/>
    <property type="evidence" value="ECO:0000318"/>
    <property type="project" value="GO_Central"/>
</dbReference>
<dbReference type="GO" id="GO:0009372">
    <property type="term" value="P:quorum sensing"/>
    <property type="evidence" value="ECO:0007669"/>
    <property type="project" value="UniProtKB-UniRule"/>
</dbReference>
<dbReference type="Gene3D" id="3.30.1360.80">
    <property type="entry name" value="S-ribosylhomocysteinase (LuxS)"/>
    <property type="match status" value="1"/>
</dbReference>
<dbReference type="HAMAP" id="MF_00091">
    <property type="entry name" value="LuxS"/>
    <property type="match status" value="1"/>
</dbReference>
<dbReference type="InterPro" id="IPR037005">
    <property type="entry name" value="LuxS_sf"/>
</dbReference>
<dbReference type="InterPro" id="IPR011249">
    <property type="entry name" value="Metalloenz_LuxS/M16"/>
</dbReference>
<dbReference type="InterPro" id="IPR003815">
    <property type="entry name" value="S-ribosylhomocysteinase"/>
</dbReference>
<dbReference type="NCBIfam" id="NF002607">
    <property type="entry name" value="PRK02260.2-5"/>
    <property type="match status" value="1"/>
</dbReference>
<dbReference type="NCBIfam" id="NF002608">
    <property type="entry name" value="PRK02260.3-1"/>
    <property type="match status" value="1"/>
</dbReference>
<dbReference type="PANTHER" id="PTHR35799">
    <property type="entry name" value="S-RIBOSYLHOMOCYSTEINE LYASE"/>
    <property type="match status" value="1"/>
</dbReference>
<dbReference type="PANTHER" id="PTHR35799:SF1">
    <property type="entry name" value="S-RIBOSYLHOMOCYSTEINE LYASE"/>
    <property type="match status" value="1"/>
</dbReference>
<dbReference type="Pfam" id="PF02664">
    <property type="entry name" value="LuxS"/>
    <property type="match status" value="1"/>
</dbReference>
<dbReference type="PIRSF" id="PIRSF006160">
    <property type="entry name" value="AI2"/>
    <property type="match status" value="1"/>
</dbReference>
<dbReference type="PRINTS" id="PR01487">
    <property type="entry name" value="LUXSPROTEIN"/>
</dbReference>
<dbReference type="SUPFAM" id="SSF63411">
    <property type="entry name" value="LuxS/MPP-like metallohydrolase"/>
    <property type="match status" value="1"/>
</dbReference>
<comment type="function">
    <text evidence="1">Involved in the synthesis of autoinducer 2 (AI-2) which is secreted by bacteria and is used to communicate both the cell density and the metabolic potential of the environment. The regulation of gene expression in response to changes in cell density is called quorum sensing. Catalyzes the transformation of S-ribosylhomocysteine (RHC) to homocysteine (HC) and 4,5-dihydroxy-2,3-pentadione (DPD) (By similarity).</text>
</comment>
<comment type="catalytic activity">
    <reaction>
        <text>S-(5-deoxy-D-ribos-5-yl)-L-homocysteine = (S)-4,5-dihydroxypentane-2,3-dione + L-homocysteine</text>
        <dbReference type="Rhea" id="RHEA:17753"/>
        <dbReference type="ChEBI" id="CHEBI:29484"/>
        <dbReference type="ChEBI" id="CHEBI:58195"/>
        <dbReference type="ChEBI" id="CHEBI:58199"/>
        <dbReference type="EC" id="4.4.1.21"/>
    </reaction>
</comment>
<comment type="cofactor">
    <cofactor evidence="1">
        <name>Fe cation</name>
        <dbReference type="ChEBI" id="CHEBI:24875"/>
    </cofactor>
    <text evidence="1">Binds 1 Fe cation per subunit.</text>
</comment>
<comment type="subunit">
    <text evidence="1">Homodimer.</text>
</comment>
<comment type="similarity">
    <text evidence="2">Belongs to the LuxS family.</text>
</comment>
<keyword id="KW-0071">Autoinducer synthesis</keyword>
<keyword id="KW-0408">Iron</keyword>
<keyword id="KW-0456">Lyase</keyword>
<keyword id="KW-0479">Metal-binding</keyword>
<keyword id="KW-0673">Quorum sensing</keyword>
<keyword id="KW-1185">Reference proteome</keyword>
<reference key="1">
    <citation type="journal article" date="2001" name="J. Bacteriol.">
        <title>Genome of the bacterium Streptococcus pneumoniae strain R6.</title>
        <authorList>
            <person name="Hoskins J."/>
            <person name="Alborn W.E. Jr."/>
            <person name="Arnold J."/>
            <person name="Blaszczak L.C."/>
            <person name="Burgett S."/>
            <person name="DeHoff B.S."/>
            <person name="Estrem S.T."/>
            <person name="Fritz L."/>
            <person name="Fu D.-J."/>
            <person name="Fuller W."/>
            <person name="Geringer C."/>
            <person name="Gilmour R."/>
            <person name="Glass J.S."/>
            <person name="Khoja H."/>
            <person name="Kraft A.R."/>
            <person name="Lagace R.E."/>
            <person name="LeBlanc D.J."/>
            <person name="Lee L.N."/>
            <person name="Lefkowitz E.J."/>
            <person name="Lu J."/>
            <person name="Matsushima P."/>
            <person name="McAhren S.M."/>
            <person name="McHenney M."/>
            <person name="McLeaster K."/>
            <person name="Mundy C.W."/>
            <person name="Nicas T.I."/>
            <person name="Norris F.H."/>
            <person name="O'Gara M."/>
            <person name="Peery R.B."/>
            <person name="Robertson G.T."/>
            <person name="Rockey P."/>
            <person name="Sun P.-M."/>
            <person name="Winkler M.E."/>
            <person name="Yang Y."/>
            <person name="Young-Bellido M."/>
            <person name="Zhao G."/>
            <person name="Zook C.A."/>
            <person name="Baltz R.H."/>
            <person name="Jaskunas S.R."/>
            <person name="Rosteck P.R. Jr."/>
            <person name="Skatrud P.L."/>
            <person name="Glass J.I."/>
        </authorList>
    </citation>
    <scope>NUCLEOTIDE SEQUENCE [LARGE SCALE GENOMIC DNA]</scope>
    <source>
        <strain>ATCC BAA-255 / R6</strain>
    </source>
</reference>
<sequence>MSKEVIVESFELDHTIVKAPYVRLIGEETGPKGDIISNYDIRLVQPNEDSIPTAGLHTIEHLLAKLIRTRIDGMIDCSPFGCRTGFHMIMWGRHTSAKIAAVIKDSLKEIAETTTWEDVPGTTIESCGNYKDHSLFSAKEWAKLILEQGISDDAFERHVI</sequence>
<feature type="chain" id="PRO_0000172266" description="S-ribosylhomocysteine lyase">
    <location>
        <begin position="1"/>
        <end position="160"/>
    </location>
</feature>
<feature type="binding site" evidence="1">
    <location>
        <position position="57"/>
    </location>
    <ligand>
        <name>Fe cation</name>
        <dbReference type="ChEBI" id="CHEBI:24875"/>
    </ligand>
</feature>
<feature type="binding site" evidence="1">
    <location>
        <position position="61"/>
    </location>
    <ligand>
        <name>Fe cation</name>
        <dbReference type="ChEBI" id="CHEBI:24875"/>
    </ligand>
</feature>
<feature type="binding site" evidence="1">
    <location>
        <position position="127"/>
    </location>
    <ligand>
        <name>Fe cation</name>
        <dbReference type="ChEBI" id="CHEBI:24875"/>
    </ligand>
</feature>
<protein>
    <recommendedName>
        <fullName>S-ribosylhomocysteine lyase</fullName>
        <ecNumber>4.4.1.21</ecNumber>
    </recommendedName>
    <alternativeName>
        <fullName>AI-2 synthesis protein</fullName>
    </alternativeName>
    <alternativeName>
        <fullName>Autoinducer-2 production protein LuxS</fullName>
    </alternativeName>
</protein>
<proteinExistence type="inferred from homology"/>
<gene>
    <name type="primary">luxS</name>
    <name type="ordered locus">spr0308</name>
</gene>
<organism>
    <name type="scientific">Streptococcus pneumoniae (strain ATCC BAA-255 / R6)</name>
    <dbReference type="NCBI Taxonomy" id="171101"/>
    <lineage>
        <taxon>Bacteria</taxon>
        <taxon>Bacillati</taxon>
        <taxon>Bacillota</taxon>
        <taxon>Bacilli</taxon>
        <taxon>Lactobacillales</taxon>
        <taxon>Streptococcaceae</taxon>
        <taxon>Streptococcus</taxon>
    </lineage>
</organism>
<name>LUXS_STRR6</name>
<evidence type="ECO:0000250" key="1"/>
<evidence type="ECO:0000305" key="2"/>